<gene>
    <name evidence="1" type="primary">lolA</name>
    <name type="ordered locus">XOO2403</name>
</gene>
<proteinExistence type="inferred from homology"/>
<accession>Q2P2R9</accession>
<keyword id="KW-0143">Chaperone</keyword>
<keyword id="KW-0574">Periplasm</keyword>
<keyword id="KW-0653">Protein transport</keyword>
<keyword id="KW-0732">Signal</keyword>
<keyword id="KW-0813">Transport</keyword>
<reference key="1">
    <citation type="journal article" date="2005" name="Jpn. Agric. Res. Q.">
        <title>Genome sequence of Xanthomonas oryzae pv. oryzae suggests contribution of large numbers of effector genes and insertion sequences to its race diversity.</title>
        <authorList>
            <person name="Ochiai H."/>
            <person name="Inoue Y."/>
            <person name="Takeya M."/>
            <person name="Sasaki A."/>
            <person name="Kaku H."/>
        </authorList>
    </citation>
    <scope>NUCLEOTIDE SEQUENCE [LARGE SCALE GENOMIC DNA]</scope>
    <source>
        <strain>MAFF 311018</strain>
    </source>
</reference>
<evidence type="ECO:0000255" key="1">
    <source>
        <dbReference type="HAMAP-Rule" id="MF_00240"/>
    </source>
</evidence>
<dbReference type="EMBL" id="AP008229">
    <property type="protein sequence ID" value="BAE69158.1"/>
    <property type="molecule type" value="Genomic_DNA"/>
</dbReference>
<dbReference type="SMR" id="Q2P2R9"/>
<dbReference type="KEGG" id="xom:XOO2403"/>
<dbReference type="HOGENOM" id="CLU_087560_0_0_6"/>
<dbReference type="GO" id="GO:0030288">
    <property type="term" value="C:outer membrane-bounded periplasmic space"/>
    <property type="evidence" value="ECO:0007669"/>
    <property type="project" value="TreeGrafter"/>
</dbReference>
<dbReference type="GO" id="GO:0044874">
    <property type="term" value="P:lipoprotein localization to outer membrane"/>
    <property type="evidence" value="ECO:0007669"/>
    <property type="project" value="UniProtKB-UniRule"/>
</dbReference>
<dbReference type="GO" id="GO:0042953">
    <property type="term" value="P:lipoprotein transport"/>
    <property type="evidence" value="ECO:0007669"/>
    <property type="project" value="InterPro"/>
</dbReference>
<dbReference type="CDD" id="cd16325">
    <property type="entry name" value="LolA"/>
    <property type="match status" value="1"/>
</dbReference>
<dbReference type="FunFam" id="2.50.20.10:FF:000006">
    <property type="entry name" value="Outer-membrane lipoprotein carrier protein"/>
    <property type="match status" value="1"/>
</dbReference>
<dbReference type="Gene3D" id="2.50.20.10">
    <property type="entry name" value="Lipoprotein localisation LolA/LolB/LppX"/>
    <property type="match status" value="1"/>
</dbReference>
<dbReference type="HAMAP" id="MF_00240">
    <property type="entry name" value="LolA"/>
    <property type="match status" value="1"/>
</dbReference>
<dbReference type="InterPro" id="IPR029046">
    <property type="entry name" value="LolA/LolB/LppX"/>
</dbReference>
<dbReference type="InterPro" id="IPR004564">
    <property type="entry name" value="OM_lipoprot_carrier_LolA-like"/>
</dbReference>
<dbReference type="InterPro" id="IPR018323">
    <property type="entry name" value="OM_lipoprot_carrier_LolA_Pbac"/>
</dbReference>
<dbReference type="NCBIfam" id="TIGR00547">
    <property type="entry name" value="lolA"/>
    <property type="match status" value="1"/>
</dbReference>
<dbReference type="PANTHER" id="PTHR35869">
    <property type="entry name" value="OUTER-MEMBRANE LIPOPROTEIN CARRIER PROTEIN"/>
    <property type="match status" value="1"/>
</dbReference>
<dbReference type="PANTHER" id="PTHR35869:SF1">
    <property type="entry name" value="OUTER-MEMBRANE LIPOPROTEIN CARRIER PROTEIN"/>
    <property type="match status" value="1"/>
</dbReference>
<dbReference type="Pfam" id="PF03548">
    <property type="entry name" value="LolA"/>
    <property type="match status" value="1"/>
</dbReference>
<dbReference type="SUPFAM" id="SSF89392">
    <property type="entry name" value="Prokaryotic lipoproteins and lipoprotein localization factors"/>
    <property type="match status" value="1"/>
</dbReference>
<name>LOLA_XANOM</name>
<organism>
    <name type="scientific">Xanthomonas oryzae pv. oryzae (strain MAFF 311018)</name>
    <dbReference type="NCBI Taxonomy" id="342109"/>
    <lineage>
        <taxon>Bacteria</taxon>
        <taxon>Pseudomonadati</taxon>
        <taxon>Pseudomonadota</taxon>
        <taxon>Gammaproteobacteria</taxon>
        <taxon>Lysobacterales</taxon>
        <taxon>Lysobacteraceae</taxon>
        <taxon>Xanthomonas</taxon>
    </lineage>
</organism>
<protein>
    <recommendedName>
        <fullName evidence="1">Outer-membrane lipoprotein carrier protein</fullName>
    </recommendedName>
</protein>
<sequence length="209" mass="22999">MHRQLRYAVLATALFASTAFAAARQELDTFTRGLKGLDGQFSQRVTDANGKVKENSSGRVALATPRQFRWEYAKPYRQLIVADGKKVWVFDPDLEQVTVRAQGSEEQNSPLVALINPALLDKKYDVSEEAAPRDGLQWLSLTPKVDTDASFQMASLGFGKDGLAKMEVVDAVGQRTTISFSGWKRNPAFAADTFRYTPAQGVDVVGDAH</sequence>
<feature type="signal peptide" evidence="1">
    <location>
        <begin position="1"/>
        <end position="21"/>
    </location>
</feature>
<feature type="chain" id="PRO_1000005710" description="Outer-membrane lipoprotein carrier protein">
    <location>
        <begin position="22"/>
        <end position="209"/>
    </location>
</feature>
<comment type="function">
    <text evidence="1">Participates in the translocation of lipoproteins from the inner membrane to the outer membrane. Only forms a complex with a lipoprotein if the residue after the N-terminal Cys is not an aspartate (The Asp acts as a targeting signal to indicate that the lipoprotein should stay in the inner membrane).</text>
</comment>
<comment type="subunit">
    <text evidence="1">Monomer.</text>
</comment>
<comment type="subcellular location">
    <subcellularLocation>
        <location evidence="1">Periplasm</location>
    </subcellularLocation>
</comment>
<comment type="similarity">
    <text evidence="1">Belongs to the LolA family.</text>
</comment>